<accession>P81430</accession>
<evidence type="ECO:0000269" key="1">
    <source>
    </source>
</evidence>
<dbReference type="Allergome" id="3388">
    <property type="allergen name" value="Ole e 7.0101"/>
</dbReference>
<dbReference type="Allergome" id="495">
    <property type="allergen name" value="Ole e 7"/>
</dbReference>
<protein>
    <recommendedName>
        <fullName>Pollen allergen Ole e 7</fullName>
    </recommendedName>
    <alternativeName>
        <fullName>Allergen Ole e VII</fullName>
    </alternativeName>
    <allergenName>Ole e 7</allergenName>
</protein>
<reference key="1">
    <citation type="journal article" date="1999" name="J. Allergy Clin. Immunol.">
        <title>Identification, isolation, and characterization of Ole e 7, a new allergen of olive tree pollen.</title>
        <authorList>
            <person name="Tejera M.L."/>
            <person name="Villalba M."/>
            <person name="Batanero E."/>
            <person name="Rodriguez R."/>
        </authorList>
    </citation>
    <scope>PROTEIN SEQUENCE (VARIANTS A AND B)</scope>
    <scope>IDENTIFICATION BY MASS SPECTROMETRY</scope>
    <source>
        <tissue>Pollen</tissue>
    </source>
</reference>
<reference key="2">
    <citation type="journal article" date="2002" name="Allergy">
        <title>An allergen from Olea europaea pollen (Ole e 7) is associated with plant-derived food anaphylaxis.</title>
        <authorList>
            <person name="Florido Lopez J.F."/>
            <person name="Quiralte Enriquez J."/>
            <person name="Arias de Saavedra Alias J.M."/>
            <person name="Saenz de San Pedro B."/>
            <person name="Martin Casanez E."/>
        </authorList>
    </citation>
    <scope>ALLERGEN</scope>
</reference>
<reference key="3">
    <citation type="journal article" date="2006" name="Anal. Chem.">
        <title>Profiling of hydrophilic proteins from Olea europaea olive pollen by MALDI TOF mass spectrometry.</title>
        <authorList>
            <person name="Napoli A."/>
            <person name="Aiello D."/>
            <person name="Di Donna L."/>
            <person name="Sajjad A."/>
            <person name="Perri E."/>
            <person name="Sindona G."/>
        </authorList>
    </citation>
    <scope>IDENTIFICATION BY MASS SPECTROMETRY</scope>
    <scope>VARIANTS</scope>
</reference>
<reference key="4">
    <citation type="journal article" date="2012" name="Talanta">
        <title>Analysis of olive allergens.</title>
        <authorList>
            <person name="Esteve C."/>
            <person name="Montealegre C."/>
            <person name="Marina M.L."/>
            <person name="Garcia M.C."/>
        </authorList>
    </citation>
    <scope>REVIEW</scope>
    <scope>NOMENCLATURE</scope>
</reference>
<keyword id="KW-0020">Allergen</keyword>
<keyword id="KW-0903">Direct protein sequencing</keyword>
<sequence length="21" mass="2199">APSQSTVTALLTSCVSYIDDQ</sequence>
<comment type="polymorphism">
    <text>Many isoforms of the allergen exist due to polymorphism. They can be classified as isoforms of type A (shown here) and isoforms of type B. A microheterogeneity is detected at positions 4 and 11 of isoforms of type A and at positions 4, 5, 10 and 11 of isoforms of type B.</text>
</comment>
<comment type="allergen">
    <text evidence="1">Causes an allergic reaction in human. Allergen from olive pollen. Important in Mediterranean countries and California. Its prevalence is related to the geographic area.</text>
</comment>
<feature type="chain" id="PRO_0000064563" description="Pollen allergen Ole e 7">
    <location>
        <begin position="1"/>
        <end position="21" status="greater than"/>
    </location>
</feature>
<feature type="sequence variant" description="In type B.">
    <original>S</original>
    <variation>G</variation>
    <location>
        <position position="5"/>
    </location>
</feature>
<feature type="sequence variant" description="In type B.">
    <original>L</original>
    <variation>K</variation>
    <location>
        <position position="10"/>
    </location>
</feature>
<feature type="sequence variant" description="In type B.">
    <original>I</original>
    <variation>K</variation>
    <location>
        <position position="18"/>
    </location>
</feature>
<feature type="non-terminal residue">
    <location>
        <position position="21"/>
    </location>
</feature>
<proteinExistence type="evidence at protein level"/>
<name>ALL7_OLEEU</name>
<organism>
    <name type="scientific">Olea europaea</name>
    <name type="common">Common olive</name>
    <dbReference type="NCBI Taxonomy" id="4146"/>
    <lineage>
        <taxon>Eukaryota</taxon>
        <taxon>Viridiplantae</taxon>
        <taxon>Streptophyta</taxon>
        <taxon>Embryophyta</taxon>
        <taxon>Tracheophyta</taxon>
        <taxon>Spermatophyta</taxon>
        <taxon>Magnoliopsida</taxon>
        <taxon>eudicotyledons</taxon>
        <taxon>Gunneridae</taxon>
        <taxon>Pentapetalae</taxon>
        <taxon>asterids</taxon>
        <taxon>lamiids</taxon>
        <taxon>Lamiales</taxon>
        <taxon>Oleaceae</taxon>
        <taxon>Oleeae</taxon>
        <taxon>Olea</taxon>
    </lineage>
</organism>